<gene>
    <name evidence="1" type="primary">pyrK</name>
    <name type="synonym">pyrDII</name>
    <name type="ordered locus">lmo1834</name>
</gene>
<organism>
    <name type="scientific">Listeria monocytogenes serovar 1/2a (strain ATCC BAA-679 / EGD-e)</name>
    <dbReference type="NCBI Taxonomy" id="169963"/>
    <lineage>
        <taxon>Bacteria</taxon>
        <taxon>Bacillati</taxon>
        <taxon>Bacillota</taxon>
        <taxon>Bacilli</taxon>
        <taxon>Bacillales</taxon>
        <taxon>Listeriaceae</taxon>
        <taxon>Listeria</taxon>
    </lineage>
</organism>
<reference key="1">
    <citation type="journal article" date="2001" name="Science">
        <title>Comparative genomics of Listeria species.</title>
        <authorList>
            <person name="Glaser P."/>
            <person name="Frangeul L."/>
            <person name="Buchrieser C."/>
            <person name="Rusniok C."/>
            <person name="Amend A."/>
            <person name="Baquero F."/>
            <person name="Berche P."/>
            <person name="Bloecker H."/>
            <person name="Brandt P."/>
            <person name="Chakraborty T."/>
            <person name="Charbit A."/>
            <person name="Chetouani F."/>
            <person name="Couve E."/>
            <person name="de Daruvar A."/>
            <person name="Dehoux P."/>
            <person name="Domann E."/>
            <person name="Dominguez-Bernal G."/>
            <person name="Duchaud E."/>
            <person name="Durant L."/>
            <person name="Dussurget O."/>
            <person name="Entian K.-D."/>
            <person name="Fsihi H."/>
            <person name="Garcia-del Portillo F."/>
            <person name="Garrido P."/>
            <person name="Gautier L."/>
            <person name="Goebel W."/>
            <person name="Gomez-Lopez N."/>
            <person name="Hain T."/>
            <person name="Hauf J."/>
            <person name="Jackson D."/>
            <person name="Jones L.-M."/>
            <person name="Kaerst U."/>
            <person name="Kreft J."/>
            <person name="Kuhn M."/>
            <person name="Kunst F."/>
            <person name="Kurapkat G."/>
            <person name="Madueno E."/>
            <person name="Maitournam A."/>
            <person name="Mata Vicente J."/>
            <person name="Ng E."/>
            <person name="Nedjari H."/>
            <person name="Nordsiek G."/>
            <person name="Novella S."/>
            <person name="de Pablos B."/>
            <person name="Perez-Diaz J.-C."/>
            <person name="Purcell R."/>
            <person name="Remmel B."/>
            <person name="Rose M."/>
            <person name="Schlueter T."/>
            <person name="Simoes N."/>
            <person name="Tierrez A."/>
            <person name="Vazquez-Boland J.-A."/>
            <person name="Voss H."/>
            <person name="Wehland J."/>
            <person name="Cossart P."/>
        </authorList>
    </citation>
    <scope>NUCLEOTIDE SEQUENCE [LARGE SCALE GENOMIC DNA]</scope>
    <source>
        <strain>ATCC BAA-679 / EGD-e</strain>
    </source>
</reference>
<dbReference type="EMBL" id="AL591981">
    <property type="protein sequence ID" value="CAC99912.1"/>
    <property type="molecule type" value="Genomic_DNA"/>
</dbReference>
<dbReference type="PIR" id="AB1304">
    <property type="entry name" value="AB1304"/>
</dbReference>
<dbReference type="RefSeq" id="NP_465359.1">
    <property type="nucleotide sequence ID" value="NC_003210.1"/>
</dbReference>
<dbReference type="RefSeq" id="WP_010989827.1">
    <property type="nucleotide sequence ID" value="NC_003210.1"/>
</dbReference>
<dbReference type="SMR" id="Q8Y666"/>
<dbReference type="STRING" id="169963.gene:17594519"/>
<dbReference type="PaxDb" id="169963-lmo1834"/>
<dbReference type="EnsemblBacteria" id="CAC99912">
    <property type="protein sequence ID" value="CAC99912"/>
    <property type="gene ID" value="CAC99912"/>
</dbReference>
<dbReference type="GeneID" id="985877"/>
<dbReference type="KEGG" id="lmo:lmo1834"/>
<dbReference type="PATRIC" id="fig|169963.11.peg.1879"/>
<dbReference type="eggNOG" id="COG0543">
    <property type="taxonomic scope" value="Bacteria"/>
</dbReference>
<dbReference type="HOGENOM" id="CLU_003827_1_2_9"/>
<dbReference type="OrthoDB" id="9778346at2"/>
<dbReference type="PhylomeDB" id="Q8Y666"/>
<dbReference type="BioCyc" id="LMON169963:LMO1834-MONOMER"/>
<dbReference type="UniPathway" id="UPA00070">
    <property type="reaction ID" value="UER00945"/>
</dbReference>
<dbReference type="Proteomes" id="UP000000817">
    <property type="component" value="Chromosome"/>
</dbReference>
<dbReference type="GO" id="GO:0051537">
    <property type="term" value="F:2 iron, 2 sulfur cluster binding"/>
    <property type="evidence" value="ECO:0007669"/>
    <property type="project" value="UniProtKB-KW"/>
</dbReference>
<dbReference type="GO" id="GO:0009055">
    <property type="term" value="F:electron transfer activity"/>
    <property type="evidence" value="ECO:0007669"/>
    <property type="project" value="UniProtKB-UniRule"/>
</dbReference>
<dbReference type="GO" id="GO:0050660">
    <property type="term" value="F:flavin adenine dinucleotide binding"/>
    <property type="evidence" value="ECO:0007669"/>
    <property type="project" value="InterPro"/>
</dbReference>
<dbReference type="GO" id="GO:0046872">
    <property type="term" value="F:metal ion binding"/>
    <property type="evidence" value="ECO:0007669"/>
    <property type="project" value="UniProtKB-KW"/>
</dbReference>
<dbReference type="GO" id="GO:0016491">
    <property type="term" value="F:oxidoreductase activity"/>
    <property type="evidence" value="ECO:0007669"/>
    <property type="project" value="InterPro"/>
</dbReference>
<dbReference type="GO" id="GO:0044205">
    <property type="term" value="P:'de novo' UMP biosynthetic process"/>
    <property type="evidence" value="ECO:0007669"/>
    <property type="project" value="UniProtKB-UniRule"/>
</dbReference>
<dbReference type="CDD" id="cd06218">
    <property type="entry name" value="DHOD_e_trans"/>
    <property type="match status" value="1"/>
</dbReference>
<dbReference type="FunFam" id="2.10.240.10:FF:000001">
    <property type="entry name" value="Dihydroorotate dehydrogenase B (NAD(+)), electron transfer subunit"/>
    <property type="match status" value="1"/>
</dbReference>
<dbReference type="FunFam" id="2.40.30.10:FF:000045">
    <property type="entry name" value="Dihydroorotate dehydrogenase B (NAD(+)), electron transfer subunit"/>
    <property type="match status" value="1"/>
</dbReference>
<dbReference type="FunFam" id="3.40.50.80:FF:000017">
    <property type="entry name" value="Dihydroorotate dehydrogenase B (NAD(+)), electron transfer subunit"/>
    <property type="match status" value="1"/>
</dbReference>
<dbReference type="Gene3D" id="2.10.240.10">
    <property type="entry name" value="Dihydroorotate dehydrogenase, electron transfer subunit"/>
    <property type="match status" value="1"/>
</dbReference>
<dbReference type="Gene3D" id="3.40.50.80">
    <property type="entry name" value="Nucleotide-binding domain of ferredoxin-NADP reductase (FNR) module"/>
    <property type="match status" value="1"/>
</dbReference>
<dbReference type="Gene3D" id="2.40.30.10">
    <property type="entry name" value="Translation factors"/>
    <property type="match status" value="1"/>
</dbReference>
<dbReference type="HAMAP" id="MF_01211">
    <property type="entry name" value="DHODB_Fe_S_bind"/>
    <property type="match status" value="1"/>
</dbReference>
<dbReference type="InterPro" id="IPR012165">
    <property type="entry name" value="Cyt_c3_hydrogenase_gsu"/>
</dbReference>
<dbReference type="InterPro" id="IPR037117">
    <property type="entry name" value="Dihydroorotate_DH_ele_sf"/>
</dbReference>
<dbReference type="InterPro" id="IPR019480">
    <property type="entry name" value="Dihydroorotate_DH_Fe-S-bd"/>
</dbReference>
<dbReference type="InterPro" id="IPR023455">
    <property type="entry name" value="Dihydroorotate_DHASE_ETsu"/>
</dbReference>
<dbReference type="InterPro" id="IPR017927">
    <property type="entry name" value="FAD-bd_FR_type"/>
</dbReference>
<dbReference type="InterPro" id="IPR039261">
    <property type="entry name" value="FNR_nucleotide-bd"/>
</dbReference>
<dbReference type="InterPro" id="IPR001433">
    <property type="entry name" value="OxRdtase_FAD/NAD-bd"/>
</dbReference>
<dbReference type="InterPro" id="IPR050353">
    <property type="entry name" value="PyrK_electron_transfer"/>
</dbReference>
<dbReference type="InterPro" id="IPR017938">
    <property type="entry name" value="Riboflavin_synthase-like_b-brl"/>
</dbReference>
<dbReference type="NCBIfam" id="NF000797">
    <property type="entry name" value="PRK00054.1-2"/>
    <property type="match status" value="1"/>
</dbReference>
<dbReference type="NCBIfam" id="NF000799">
    <property type="entry name" value="PRK00054.1-4"/>
    <property type="match status" value="1"/>
</dbReference>
<dbReference type="PANTHER" id="PTHR43513">
    <property type="entry name" value="DIHYDROOROTATE DEHYDROGENASE B (NAD(+)), ELECTRON TRANSFER SUBUNIT"/>
    <property type="match status" value="1"/>
</dbReference>
<dbReference type="PANTHER" id="PTHR43513:SF3">
    <property type="entry name" value="DIHYDROOROTATE DEHYDROGENASE B (NAD(+)), ELECTRON TRANSFER SUBUNIT-RELATED"/>
    <property type="match status" value="1"/>
</dbReference>
<dbReference type="Pfam" id="PF10418">
    <property type="entry name" value="DHODB_Fe-S_bind"/>
    <property type="match status" value="1"/>
</dbReference>
<dbReference type="Pfam" id="PF00175">
    <property type="entry name" value="NAD_binding_1"/>
    <property type="match status" value="1"/>
</dbReference>
<dbReference type="PIRSF" id="PIRSF006816">
    <property type="entry name" value="Cyc3_hyd_g"/>
    <property type="match status" value="1"/>
</dbReference>
<dbReference type="PRINTS" id="PR00406">
    <property type="entry name" value="CYTB5RDTASE"/>
</dbReference>
<dbReference type="SUPFAM" id="SSF52343">
    <property type="entry name" value="Ferredoxin reductase-like, C-terminal NADP-linked domain"/>
    <property type="match status" value="1"/>
</dbReference>
<dbReference type="SUPFAM" id="SSF63380">
    <property type="entry name" value="Riboflavin synthase domain-like"/>
    <property type="match status" value="1"/>
</dbReference>
<dbReference type="PROSITE" id="PS51384">
    <property type="entry name" value="FAD_FR"/>
    <property type="match status" value="1"/>
</dbReference>
<sequence>MLQTEMKVIQQTEIADKVYELILTGECVAGMSPGQFLMLKPSRSDLLMRRPISICSYDKTAKTCILLYRVEGDGTRDFSKLSEGDTIDVLGPLGKGFDIDTTPAPKTALLIGGGIGVPPMYQLGKELAEKGVQVMFVNGFQSAKDSFYAQEMAEYGTVHIATVDGSLGTQGFVTDITKNFPEEPDVIYSCGPKAMLQAVKASFPETKTYLSLEERMACGIGACYACVCPKADDTNKQFKVCEDGPVFRADEVKL</sequence>
<evidence type="ECO:0000255" key="1">
    <source>
        <dbReference type="HAMAP-Rule" id="MF_01211"/>
    </source>
</evidence>
<name>PYRK_LISMO</name>
<protein>
    <recommendedName>
        <fullName evidence="1">Dihydroorotate dehydrogenase B (NAD(+)), electron transfer subunit</fullName>
    </recommendedName>
    <alternativeName>
        <fullName evidence="1">Dihydroorotate oxidase B, electron transfer subunit</fullName>
    </alternativeName>
</protein>
<comment type="function">
    <text evidence="1">Responsible for channeling the electrons from the oxidation of dihydroorotate from the FMN redox center in the PyrD type B subunit to the ultimate electron acceptor NAD(+).</text>
</comment>
<comment type="cofactor">
    <cofactor evidence="1">
        <name>[2Fe-2S] cluster</name>
        <dbReference type="ChEBI" id="CHEBI:190135"/>
    </cofactor>
    <text evidence="1">Binds 1 [2Fe-2S] cluster per subunit.</text>
</comment>
<comment type="cofactor">
    <cofactor evidence="1">
        <name>FAD</name>
        <dbReference type="ChEBI" id="CHEBI:57692"/>
    </cofactor>
    <text evidence="1">Binds 1 FAD per subunit.</text>
</comment>
<comment type="pathway">
    <text evidence="1">Pyrimidine metabolism; UMP biosynthesis via de novo pathway; orotate from (S)-dihydroorotate (NAD(+) route): step 1/1.</text>
</comment>
<comment type="subunit">
    <text evidence="1">Heterotetramer of 2 PyrK and 2 PyrD type B subunits.</text>
</comment>
<comment type="similarity">
    <text evidence="1">Belongs to the PyrK family.</text>
</comment>
<feature type="chain" id="PRO_0000148366" description="Dihydroorotate dehydrogenase B (NAD(+)), electron transfer subunit">
    <location>
        <begin position="1"/>
        <end position="254"/>
    </location>
</feature>
<feature type="domain" description="FAD-binding FR-type" evidence="1">
    <location>
        <begin position="1"/>
        <end position="99"/>
    </location>
</feature>
<feature type="binding site" evidence="1">
    <location>
        <begin position="50"/>
        <end position="53"/>
    </location>
    <ligand>
        <name>FAD</name>
        <dbReference type="ChEBI" id="CHEBI:57692"/>
    </ligand>
</feature>
<feature type="binding site" evidence="1">
    <location>
        <begin position="67"/>
        <end position="69"/>
    </location>
    <ligand>
        <name>FAD</name>
        <dbReference type="ChEBI" id="CHEBI:57692"/>
    </ligand>
</feature>
<feature type="binding site" evidence="1">
    <location>
        <begin position="74"/>
        <end position="75"/>
    </location>
    <ligand>
        <name>FAD</name>
        <dbReference type="ChEBI" id="CHEBI:57692"/>
    </ligand>
</feature>
<feature type="binding site" evidence="1">
    <location>
        <position position="218"/>
    </location>
    <ligand>
        <name>[2Fe-2S] cluster</name>
        <dbReference type="ChEBI" id="CHEBI:190135"/>
    </ligand>
</feature>
<feature type="binding site" evidence="1">
    <location>
        <position position="223"/>
    </location>
    <ligand>
        <name>[2Fe-2S] cluster</name>
        <dbReference type="ChEBI" id="CHEBI:190135"/>
    </ligand>
</feature>
<feature type="binding site" evidence="1">
    <location>
        <position position="226"/>
    </location>
    <ligand>
        <name>[2Fe-2S] cluster</name>
        <dbReference type="ChEBI" id="CHEBI:190135"/>
    </ligand>
</feature>
<feature type="binding site" evidence="1">
    <location>
        <position position="241"/>
    </location>
    <ligand>
        <name>[2Fe-2S] cluster</name>
        <dbReference type="ChEBI" id="CHEBI:190135"/>
    </ligand>
</feature>
<keyword id="KW-0001">2Fe-2S</keyword>
<keyword id="KW-0249">Electron transport</keyword>
<keyword id="KW-0274">FAD</keyword>
<keyword id="KW-0285">Flavoprotein</keyword>
<keyword id="KW-0408">Iron</keyword>
<keyword id="KW-0411">Iron-sulfur</keyword>
<keyword id="KW-0479">Metal-binding</keyword>
<keyword id="KW-0665">Pyrimidine biosynthesis</keyword>
<keyword id="KW-1185">Reference proteome</keyword>
<keyword id="KW-0813">Transport</keyword>
<accession>Q8Y666</accession>
<proteinExistence type="inferred from homology"/>